<organism>
    <name type="scientific">Psychrobacter sp. (strain PRwf-1)</name>
    <dbReference type="NCBI Taxonomy" id="349106"/>
    <lineage>
        <taxon>Bacteria</taxon>
        <taxon>Pseudomonadati</taxon>
        <taxon>Pseudomonadota</taxon>
        <taxon>Gammaproteobacteria</taxon>
        <taxon>Moraxellales</taxon>
        <taxon>Moraxellaceae</taxon>
        <taxon>Psychrobacter</taxon>
    </lineage>
</organism>
<accession>A5WG46</accession>
<feature type="chain" id="PRO_0000358670" description="NADH-quinone oxidoreductase subunit C/D">
    <location>
        <begin position="1"/>
        <end position="595"/>
    </location>
</feature>
<feature type="region of interest" description="NADH dehydrogenase I subunit C" evidence="1">
    <location>
        <begin position="1"/>
        <end position="186"/>
    </location>
</feature>
<feature type="region of interest" description="NADH dehydrogenase I subunit D" evidence="1">
    <location>
        <begin position="210"/>
        <end position="595"/>
    </location>
</feature>
<comment type="function">
    <text evidence="1">NDH-1 shuttles electrons from NADH, via FMN and iron-sulfur (Fe-S) centers, to quinones in the respiratory chain. The immediate electron acceptor for the enzyme in this species is believed to be ubiquinone. Couples the redox reaction to proton translocation (for every two electrons transferred, four hydrogen ions are translocated across the cytoplasmic membrane), and thus conserves the redox energy in a proton gradient.</text>
</comment>
<comment type="catalytic activity">
    <reaction evidence="1">
        <text>a quinone + NADH + 5 H(+)(in) = a quinol + NAD(+) + 4 H(+)(out)</text>
        <dbReference type="Rhea" id="RHEA:57888"/>
        <dbReference type="ChEBI" id="CHEBI:15378"/>
        <dbReference type="ChEBI" id="CHEBI:24646"/>
        <dbReference type="ChEBI" id="CHEBI:57540"/>
        <dbReference type="ChEBI" id="CHEBI:57945"/>
        <dbReference type="ChEBI" id="CHEBI:132124"/>
    </reaction>
</comment>
<comment type="subunit">
    <text evidence="1">NDH-1 is composed of 13 different subunits. Subunits NuoB, CD, E, F, and G constitute the peripheral sector of the complex.</text>
</comment>
<comment type="subcellular location">
    <subcellularLocation>
        <location evidence="1">Cell inner membrane</location>
        <topology evidence="1">Peripheral membrane protein</topology>
        <orientation evidence="1">Cytoplasmic side</orientation>
    </subcellularLocation>
</comment>
<comment type="similarity">
    <text evidence="1">In the N-terminal section; belongs to the complex I 30 kDa subunit family.</text>
</comment>
<comment type="similarity">
    <text evidence="1">In the C-terminal section; belongs to the complex I 49 kDa subunit family.</text>
</comment>
<proteinExistence type="inferred from homology"/>
<sequence>MVTDNSKATDNSANPNMTQHAVLRELGHKFAGKFTEQFTFDGIPTIWVSRQDLLDVLMYLRTLPKPYVMLLDLSAMDERLRQHRDGLPASDFTVFYHLMSLERNSDIRVKVALSEDDLKVPTATKIWPNANWYEREVWDMFGIVFDGHPHLTRILLPKYWEGHPLRKEYHARATEFTPYFLNNAKQQFEQENLRFVPEEWGMKRSGRDEDFMFLNLGPNHPSAHGAFRLVLQLDGEEVIDCIPDIGYHHRGAEKMAERQTWHSYIPYTDRIDYLGGVMNELPYVMAVEQLAGITVPERAQTIRVMMSEFFRITNNLLYFGTFIQDAGGMTPVFYMFTDRQKAYDVIEAVTGYRMHPAWFRIGGTAADLPRGWQRLVREFLDWMPQRLDEYVKAAMENSVLKGRTQNVAQYDAKQALAWGVTGAGLRATGVEFDLRKARPYMGYENYDFEIPVGYNGDAYDRCMVKIEEIRQSLRIIRQCMDNMPSGPYKADHPLAVPPPKNRTLNDIETLINHFISVSWGPVMPAGEASMMVEATKGINSYYITSDRSTMSYRTRIRTPTFAHLQQMPSVINGSLVSDLIIYLASIDIVMADTDR</sequence>
<name>NUOCD_PSYWF</name>
<protein>
    <recommendedName>
        <fullName evidence="1">NADH-quinone oxidoreductase subunit C/D</fullName>
        <ecNumber evidence="1">7.1.1.-</ecNumber>
    </recommendedName>
    <alternativeName>
        <fullName evidence="1">NADH dehydrogenase I subunit C/D</fullName>
    </alternativeName>
    <alternativeName>
        <fullName evidence="1">NDH-1 subunit C/D</fullName>
    </alternativeName>
</protein>
<keyword id="KW-0997">Cell inner membrane</keyword>
<keyword id="KW-1003">Cell membrane</keyword>
<keyword id="KW-0472">Membrane</keyword>
<keyword id="KW-0511">Multifunctional enzyme</keyword>
<keyword id="KW-0520">NAD</keyword>
<keyword id="KW-0874">Quinone</keyword>
<keyword id="KW-1278">Translocase</keyword>
<keyword id="KW-0813">Transport</keyword>
<keyword id="KW-0830">Ubiquinone</keyword>
<gene>
    <name evidence="1" type="primary">nuoC</name>
    <name evidence="1" type="synonym">nuoCD</name>
    <name evidence="1" type="synonym">nuoD</name>
    <name type="ordered locus">PsycPRwf_1697</name>
</gene>
<dbReference type="EC" id="7.1.1.-" evidence="1"/>
<dbReference type="EMBL" id="CP000713">
    <property type="protein sequence ID" value="ABQ94637.1"/>
    <property type="molecule type" value="Genomic_DNA"/>
</dbReference>
<dbReference type="SMR" id="A5WG46"/>
<dbReference type="STRING" id="349106.PsycPRwf_1697"/>
<dbReference type="KEGG" id="prw:PsycPRwf_1697"/>
<dbReference type="eggNOG" id="COG0649">
    <property type="taxonomic scope" value="Bacteria"/>
</dbReference>
<dbReference type="eggNOG" id="COG0852">
    <property type="taxonomic scope" value="Bacteria"/>
</dbReference>
<dbReference type="HOGENOM" id="CLU_015134_3_2_6"/>
<dbReference type="GO" id="GO:0030964">
    <property type="term" value="C:NADH dehydrogenase complex"/>
    <property type="evidence" value="ECO:0007669"/>
    <property type="project" value="InterPro"/>
</dbReference>
<dbReference type="GO" id="GO:0005886">
    <property type="term" value="C:plasma membrane"/>
    <property type="evidence" value="ECO:0007669"/>
    <property type="project" value="UniProtKB-SubCell"/>
</dbReference>
<dbReference type="GO" id="GO:0051287">
    <property type="term" value="F:NAD binding"/>
    <property type="evidence" value="ECO:0007669"/>
    <property type="project" value="InterPro"/>
</dbReference>
<dbReference type="GO" id="GO:0008137">
    <property type="term" value="F:NADH dehydrogenase (ubiquinone) activity"/>
    <property type="evidence" value="ECO:0007669"/>
    <property type="project" value="InterPro"/>
</dbReference>
<dbReference type="GO" id="GO:0050136">
    <property type="term" value="F:NADH:ubiquinone reductase (non-electrogenic) activity"/>
    <property type="evidence" value="ECO:0007669"/>
    <property type="project" value="UniProtKB-UniRule"/>
</dbReference>
<dbReference type="GO" id="GO:0048038">
    <property type="term" value="F:quinone binding"/>
    <property type="evidence" value="ECO:0007669"/>
    <property type="project" value="UniProtKB-KW"/>
</dbReference>
<dbReference type="FunFam" id="1.10.645.10:FF:000001">
    <property type="entry name" value="NADH-quinone oxidoreductase subunit C/D"/>
    <property type="match status" value="1"/>
</dbReference>
<dbReference type="Gene3D" id="1.10.645.10">
    <property type="entry name" value="Cytochrome-c3 Hydrogenase, chain B"/>
    <property type="match status" value="1"/>
</dbReference>
<dbReference type="Gene3D" id="3.30.460.80">
    <property type="entry name" value="NADH:ubiquinone oxidoreductase, 30kDa subunit"/>
    <property type="match status" value="1"/>
</dbReference>
<dbReference type="HAMAP" id="MF_01357">
    <property type="entry name" value="NDH1_NuoC"/>
    <property type="match status" value="1"/>
</dbReference>
<dbReference type="HAMAP" id="MF_01359">
    <property type="entry name" value="NDH1_NuoCD_1"/>
    <property type="match status" value="1"/>
</dbReference>
<dbReference type="HAMAP" id="MF_01358">
    <property type="entry name" value="NDH1_NuoD"/>
    <property type="match status" value="1"/>
</dbReference>
<dbReference type="InterPro" id="IPR010218">
    <property type="entry name" value="NADH_DH_suC"/>
</dbReference>
<dbReference type="InterPro" id="IPR023062">
    <property type="entry name" value="NADH_DH_suCD"/>
</dbReference>
<dbReference type="InterPro" id="IPR001135">
    <property type="entry name" value="NADH_Q_OxRdtase_suD"/>
</dbReference>
<dbReference type="InterPro" id="IPR037232">
    <property type="entry name" value="NADH_quin_OxRdtase_su_C/D-like"/>
</dbReference>
<dbReference type="InterPro" id="IPR001268">
    <property type="entry name" value="NADH_UbQ_OxRdtase_30kDa_su"/>
</dbReference>
<dbReference type="InterPro" id="IPR014029">
    <property type="entry name" value="NADH_UbQ_OxRdtase_49kDa_CS"/>
</dbReference>
<dbReference type="InterPro" id="IPR022885">
    <property type="entry name" value="NDH1_su_D/H"/>
</dbReference>
<dbReference type="InterPro" id="IPR029014">
    <property type="entry name" value="NiFe-Hase_large"/>
</dbReference>
<dbReference type="NCBIfam" id="TIGR01961">
    <property type="entry name" value="NuoC_fam"/>
    <property type="match status" value="1"/>
</dbReference>
<dbReference type="NCBIfam" id="TIGR01962">
    <property type="entry name" value="NuoD"/>
    <property type="match status" value="1"/>
</dbReference>
<dbReference type="NCBIfam" id="NF004739">
    <property type="entry name" value="PRK06075.1"/>
    <property type="match status" value="1"/>
</dbReference>
<dbReference type="NCBIfam" id="NF008728">
    <property type="entry name" value="PRK11742.1"/>
    <property type="match status" value="1"/>
</dbReference>
<dbReference type="PANTHER" id="PTHR11993:SF45">
    <property type="entry name" value="NADH-QUINONE OXIDOREDUCTASE SUBUNIT C_D"/>
    <property type="match status" value="1"/>
</dbReference>
<dbReference type="PANTHER" id="PTHR11993">
    <property type="entry name" value="NADH-UBIQUINONE OXIDOREDUCTASE 49 KDA SUBUNIT"/>
    <property type="match status" value="1"/>
</dbReference>
<dbReference type="Pfam" id="PF00329">
    <property type="entry name" value="Complex1_30kDa"/>
    <property type="match status" value="1"/>
</dbReference>
<dbReference type="Pfam" id="PF00346">
    <property type="entry name" value="Complex1_49kDa"/>
    <property type="match status" value="1"/>
</dbReference>
<dbReference type="SUPFAM" id="SSF56762">
    <property type="entry name" value="HydB/Nqo4-like"/>
    <property type="match status" value="1"/>
</dbReference>
<dbReference type="SUPFAM" id="SSF143243">
    <property type="entry name" value="Nqo5-like"/>
    <property type="match status" value="1"/>
</dbReference>
<dbReference type="PROSITE" id="PS00535">
    <property type="entry name" value="COMPLEX1_49K"/>
    <property type="match status" value="1"/>
</dbReference>
<reference key="1">
    <citation type="submission" date="2007-05" db="EMBL/GenBank/DDBJ databases">
        <title>Complete sequence of chromosome of Psychrobacter sp. PRwf-1.</title>
        <authorList>
            <consortium name="US DOE Joint Genome Institute"/>
            <person name="Copeland A."/>
            <person name="Lucas S."/>
            <person name="Lapidus A."/>
            <person name="Barry K."/>
            <person name="Detter J.C."/>
            <person name="Glavina del Rio T."/>
            <person name="Hammon N."/>
            <person name="Israni S."/>
            <person name="Dalin E."/>
            <person name="Tice H."/>
            <person name="Pitluck S."/>
            <person name="Chain P."/>
            <person name="Malfatti S."/>
            <person name="Shin M."/>
            <person name="Vergez L."/>
            <person name="Schmutz J."/>
            <person name="Larimer F."/>
            <person name="Land M."/>
            <person name="Hauser L."/>
            <person name="Kyrpides N."/>
            <person name="Kim E."/>
            <person name="Tiedje J."/>
            <person name="Richardson P."/>
        </authorList>
    </citation>
    <scope>NUCLEOTIDE SEQUENCE [LARGE SCALE GENOMIC DNA]</scope>
    <source>
        <strain>PRwf-1</strain>
    </source>
</reference>
<evidence type="ECO:0000255" key="1">
    <source>
        <dbReference type="HAMAP-Rule" id="MF_01359"/>
    </source>
</evidence>